<name>PQQE_STRRO</name>
<keyword id="KW-0004">4Fe-4S</keyword>
<keyword id="KW-0408">Iron</keyword>
<keyword id="KW-0411">Iron-sulfur</keyword>
<keyword id="KW-0479">Metal-binding</keyword>
<keyword id="KW-0560">Oxidoreductase</keyword>
<keyword id="KW-0614">Plasmid</keyword>
<keyword id="KW-0884">PQQ biosynthesis</keyword>
<keyword id="KW-0949">S-adenosyl-L-methionine</keyword>
<dbReference type="EC" id="1.21.98.4" evidence="1"/>
<dbReference type="EMBL" id="AB088224">
    <property type="protein sequence ID" value="BAC76463.1"/>
    <property type="molecule type" value="Genomic_DNA"/>
</dbReference>
<dbReference type="RefSeq" id="WP_011113086.1">
    <property type="nucleotide sequence ID" value="NC_004808.2"/>
</dbReference>
<dbReference type="SMR" id="P59749"/>
<dbReference type="GeneID" id="91467368"/>
<dbReference type="UniPathway" id="UPA00539"/>
<dbReference type="GO" id="GO:0051539">
    <property type="term" value="F:4 iron, 4 sulfur cluster binding"/>
    <property type="evidence" value="ECO:0007669"/>
    <property type="project" value="UniProtKB-KW"/>
</dbReference>
<dbReference type="GO" id="GO:0009975">
    <property type="term" value="F:cyclase activity"/>
    <property type="evidence" value="ECO:0007669"/>
    <property type="project" value="UniProtKB-UniRule"/>
</dbReference>
<dbReference type="GO" id="GO:0005506">
    <property type="term" value="F:iron ion binding"/>
    <property type="evidence" value="ECO:0007669"/>
    <property type="project" value="UniProtKB-UniRule"/>
</dbReference>
<dbReference type="GO" id="GO:0016491">
    <property type="term" value="F:oxidoreductase activity"/>
    <property type="evidence" value="ECO:0007669"/>
    <property type="project" value="UniProtKB-KW"/>
</dbReference>
<dbReference type="GO" id="GO:1904047">
    <property type="term" value="F:S-adenosyl-L-methionine binding"/>
    <property type="evidence" value="ECO:0007669"/>
    <property type="project" value="UniProtKB-UniRule"/>
</dbReference>
<dbReference type="GO" id="GO:0018189">
    <property type="term" value="P:pyrroloquinoline quinone biosynthetic process"/>
    <property type="evidence" value="ECO:0007669"/>
    <property type="project" value="UniProtKB-UniRule"/>
</dbReference>
<dbReference type="CDD" id="cd01335">
    <property type="entry name" value="Radical_SAM"/>
    <property type="match status" value="1"/>
</dbReference>
<dbReference type="CDD" id="cd21119">
    <property type="entry name" value="SPASM_PqqE"/>
    <property type="match status" value="1"/>
</dbReference>
<dbReference type="Gene3D" id="3.20.20.70">
    <property type="entry name" value="Aldolase class I"/>
    <property type="match status" value="1"/>
</dbReference>
<dbReference type="HAMAP" id="MF_00660">
    <property type="entry name" value="PqqE"/>
    <property type="match status" value="1"/>
</dbReference>
<dbReference type="InterPro" id="IPR023885">
    <property type="entry name" value="4Fe4S-binding_SPASM_dom"/>
</dbReference>
<dbReference type="InterPro" id="IPR013785">
    <property type="entry name" value="Aldolase_TIM"/>
</dbReference>
<dbReference type="InterPro" id="IPR006638">
    <property type="entry name" value="Elp3/MiaA/NifB-like_rSAM"/>
</dbReference>
<dbReference type="InterPro" id="IPR011843">
    <property type="entry name" value="PQQ_synth_PqqE_bac"/>
</dbReference>
<dbReference type="InterPro" id="IPR017200">
    <property type="entry name" value="PqqE-like"/>
</dbReference>
<dbReference type="InterPro" id="IPR050377">
    <property type="entry name" value="Radical_SAM_PqqE_MftC-like"/>
</dbReference>
<dbReference type="InterPro" id="IPR007197">
    <property type="entry name" value="rSAM"/>
</dbReference>
<dbReference type="NCBIfam" id="TIGR02109">
    <property type="entry name" value="PQQ_syn_pqqE"/>
    <property type="match status" value="1"/>
</dbReference>
<dbReference type="NCBIfam" id="TIGR04085">
    <property type="entry name" value="rSAM_more_4Fe4S"/>
    <property type="match status" value="1"/>
</dbReference>
<dbReference type="PANTHER" id="PTHR11228:SF7">
    <property type="entry name" value="PQQA PEPTIDE CYCLASE"/>
    <property type="match status" value="1"/>
</dbReference>
<dbReference type="PANTHER" id="PTHR11228">
    <property type="entry name" value="RADICAL SAM DOMAIN PROTEIN"/>
    <property type="match status" value="1"/>
</dbReference>
<dbReference type="Pfam" id="PF04055">
    <property type="entry name" value="Radical_SAM"/>
    <property type="match status" value="1"/>
</dbReference>
<dbReference type="Pfam" id="PF13186">
    <property type="entry name" value="SPASM"/>
    <property type="match status" value="1"/>
</dbReference>
<dbReference type="PIRSF" id="PIRSF037420">
    <property type="entry name" value="PQQ_syn_pqqE"/>
    <property type="match status" value="1"/>
</dbReference>
<dbReference type="SFLD" id="SFLDF00280">
    <property type="entry name" value="coenzyme_PQQ_synthesis_protein"/>
    <property type="match status" value="1"/>
</dbReference>
<dbReference type="SFLD" id="SFLDG01067">
    <property type="entry name" value="SPASM/twitch_domain_containing"/>
    <property type="match status" value="1"/>
</dbReference>
<dbReference type="SMART" id="SM00729">
    <property type="entry name" value="Elp3"/>
    <property type="match status" value="1"/>
</dbReference>
<dbReference type="SUPFAM" id="SSF102114">
    <property type="entry name" value="Radical SAM enzymes"/>
    <property type="match status" value="1"/>
</dbReference>
<dbReference type="PROSITE" id="PS51918">
    <property type="entry name" value="RADICAL_SAM"/>
    <property type="match status" value="1"/>
</dbReference>
<feature type="chain" id="PRO_0000219953" description="PqqA peptide cyclase">
    <location>
        <begin position="1"/>
        <end position="364"/>
    </location>
</feature>
<feature type="domain" description="Radical SAM core" evidence="2">
    <location>
        <begin position="6"/>
        <end position="222"/>
    </location>
</feature>
<feature type="binding site" evidence="1">
    <location>
        <position position="20"/>
    </location>
    <ligand>
        <name>[4Fe-4S] cluster</name>
        <dbReference type="ChEBI" id="CHEBI:49883"/>
        <note>4Fe-4S-S-AdoMet</note>
    </ligand>
</feature>
<feature type="binding site" evidence="1">
    <location>
        <position position="24"/>
    </location>
    <ligand>
        <name>[4Fe-4S] cluster</name>
        <dbReference type="ChEBI" id="CHEBI:49883"/>
        <note>4Fe-4S-S-AdoMet</note>
    </ligand>
</feature>
<feature type="binding site" evidence="1">
    <location>
        <position position="27"/>
    </location>
    <ligand>
        <name>[4Fe-4S] cluster</name>
        <dbReference type="ChEBI" id="CHEBI:49883"/>
        <note>4Fe-4S-S-AdoMet</note>
    </ligand>
</feature>
<organism>
    <name type="scientific">Streptomyces rochei</name>
    <name type="common">Streptomyces parvullus</name>
    <dbReference type="NCBI Taxonomy" id="1928"/>
    <lineage>
        <taxon>Bacteria</taxon>
        <taxon>Bacillati</taxon>
        <taxon>Actinomycetota</taxon>
        <taxon>Actinomycetes</taxon>
        <taxon>Kitasatosporales</taxon>
        <taxon>Streptomycetaceae</taxon>
        <taxon>Streptomyces</taxon>
        <taxon>Streptomyces rochei group</taxon>
    </lineage>
</organism>
<comment type="function">
    <text evidence="1">Catalyzes the cross-linking of a glutamate residue and a tyrosine residue in the PqqA protein as part of the biosynthesis of pyrroloquinoline quinone (PQQ).</text>
</comment>
<comment type="catalytic activity">
    <reaction evidence="1">
        <text>[PQQ precursor protein] + S-adenosyl-L-methionine = E-Y cross-linked-[PQQ precursor protein] + 5'-deoxyadenosine + L-methionine + H(+)</text>
        <dbReference type="Rhea" id="RHEA:56836"/>
        <dbReference type="Rhea" id="RHEA-COMP:14800"/>
        <dbReference type="Rhea" id="RHEA-COMP:14801"/>
        <dbReference type="ChEBI" id="CHEBI:15378"/>
        <dbReference type="ChEBI" id="CHEBI:17319"/>
        <dbReference type="ChEBI" id="CHEBI:57844"/>
        <dbReference type="ChEBI" id="CHEBI:59789"/>
        <dbReference type="ChEBI" id="CHEBI:141026"/>
        <dbReference type="ChEBI" id="CHEBI:141027"/>
        <dbReference type="EC" id="1.21.98.4"/>
    </reaction>
</comment>
<comment type="cofactor">
    <cofactor evidence="1">
        <name>[4Fe-4S] cluster</name>
        <dbReference type="ChEBI" id="CHEBI:49883"/>
    </cofactor>
    <text evidence="1">Binds 1 [4Fe-4S] cluster. The cluster is coordinated with 3 cysteines and an exchangeable S-adenosyl-L-methionine.</text>
</comment>
<comment type="pathway">
    <text evidence="1">Cofactor biosynthesis; pyrroloquinoline quinone biosynthesis.</text>
</comment>
<comment type="subunit">
    <text evidence="1">Interacts with PqqD. The interaction is necessary for activity of PqqE.</text>
</comment>
<comment type="similarity">
    <text evidence="1">Belongs to the radical SAM superfamily. PqqE family.</text>
</comment>
<accession>P59749</accession>
<accession>Q83X99</accession>
<gene>
    <name evidence="1" type="primary">pqqE</name>
</gene>
<proteinExistence type="inferred from homology"/>
<evidence type="ECO:0000255" key="1">
    <source>
        <dbReference type="HAMAP-Rule" id="MF_00660"/>
    </source>
</evidence>
<evidence type="ECO:0000255" key="2">
    <source>
        <dbReference type="PROSITE-ProRule" id="PRU01266"/>
    </source>
</evidence>
<sequence>MADPAVGAPAGMLIELTHRCPLHCPYCSNPLELVRREAELTCEQWTDILTQARELGVVQMHFSGGEPLARPDLPDLVGHARRLGAYVNLVTSGVGLTAERAHDLARRGVDHVQLSLQDADPAAGQAIAGARVHTAKLEAARAVTAAGLPLTVNIVLHRGNIDRTGRMVDLAVDLGADRIELANTQYYGWGLRNRAALMPTAAQLAAAREAVRHARTRYAGGPELVYVAADYYDDRPKPCMDGWGSTQLTVTPAGDVLPCPAAYAITTLPVENALRRPLSEIWYASRSFNAYRGTGWMREPCRTCPERHADHGGCRCQAFQLTGDAAATDPACGLSPHRSLVDAALAEVTDGPVPAFVPRGPVPA</sequence>
<reference key="1">
    <citation type="journal article" date="2003" name="Mol. Microbiol.">
        <title>The large linear plasmid pSLA2-L of Streptomyces rochei has an unusually condensed gene organization for secondary metabolism.</title>
        <authorList>
            <person name="Mochizuki S."/>
            <person name="Hiratsu K."/>
            <person name="Suwa M."/>
            <person name="Ishii T."/>
            <person name="Sugino F."/>
            <person name="Yamada K."/>
            <person name="Kinashi H."/>
        </authorList>
    </citation>
    <scope>NUCLEOTIDE SEQUENCE [GENOMIC DNA]</scope>
    <source>
        <strain>7434AN4</strain>
    </source>
</reference>
<protein>
    <recommendedName>
        <fullName evidence="1">PqqA peptide cyclase</fullName>
        <ecNumber evidence="1">1.21.98.4</ecNumber>
    </recommendedName>
    <alternativeName>
        <fullName evidence="1">Coenzyme PQQ synthesis protein E</fullName>
    </alternativeName>
    <alternativeName>
        <fullName evidence="1">Pyrroloquinoline quinone biosynthesis protein E</fullName>
    </alternativeName>
</protein>
<geneLocation type="plasmid">
    <name>pSLA2-L</name>
</geneLocation>